<organism>
    <name type="scientific">Mus musculus</name>
    <name type="common">Mouse</name>
    <dbReference type="NCBI Taxonomy" id="10090"/>
    <lineage>
        <taxon>Eukaryota</taxon>
        <taxon>Metazoa</taxon>
        <taxon>Chordata</taxon>
        <taxon>Craniata</taxon>
        <taxon>Vertebrata</taxon>
        <taxon>Euteleostomi</taxon>
        <taxon>Mammalia</taxon>
        <taxon>Eutheria</taxon>
        <taxon>Euarchontoglires</taxon>
        <taxon>Glires</taxon>
        <taxon>Rodentia</taxon>
        <taxon>Myomorpha</taxon>
        <taxon>Muroidea</taxon>
        <taxon>Muridae</taxon>
        <taxon>Murinae</taxon>
        <taxon>Mus</taxon>
        <taxon>Mus</taxon>
    </lineage>
</organism>
<reference key="1">
    <citation type="journal article" date="1998" name="Gene">
        <title>Cloning, functional expression, and chromosomal localization of the human and mouse gp180-carboxypeptidase D-like enzyme.</title>
        <authorList>
            <person name="Ishikawa T."/>
            <person name="Murakami K."/>
            <person name="Kido Y."/>
            <person name="Ohnishi S."/>
            <person name="Yazaki Y."/>
            <person name="Harada F."/>
            <person name="Kuroki K."/>
        </authorList>
    </citation>
    <scope>NUCLEOTIDE SEQUENCE [MRNA]</scope>
    <source>
        <strain>BALB/cJ</strain>
        <tissue>Liver</tissue>
    </source>
</reference>
<reference key="2">
    <citation type="journal article" date="2005" name="Science">
        <title>The transcriptional landscape of the mammalian genome.</title>
        <authorList>
            <person name="Carninci P."/>
            <person name="Kasukawa T."/>
            <person name="Katayama S."/>
            <person name="Gough J."/>
            <person name="Frith M.C."/>
            <person name="Maeda N."/>
            <person name="Oyama R."/>
            <person name="Ravasi T."/>
            <person name="Lenhard B."/>
            <person name="Wells C."/>
            <person name="Kodzius R."/>
            <person name="Shimokawa K."/>
            <person name="Bajic V.B."/>
            <person name="Brenner S.E."/>
            <person name="Batalov S."/>
            <person name="Forrest A.R."/>
            <person name="Zavolan M."/>
            <person name="Davis M.J."/>
            <person name="Wilming L.G."/>
            <person name="Aidinis V."/>
            <person name="Allen J.E."/>
            <person name="Ambesi-Impiombato A."/>
            <person name="Apweiler R."/>
            <person name="Aturaliya R.N."/>
            <person name="Bailey T.L."/>
            <person name="Bansal M."/>
            <person name="Baxter L."/>
            <person name="Beisel K.W."/>
            <person name="Bersano T."/>
            <person name="Bono H."/>
            <person name="Chalk A.M."/>
            <person name="Chiu K.P."/>
            <person name="Choudhary V."/>
            <person name="Christoffels A."/>
            <person name="Clutterbuck D.R."/>
            <person name="Crowe M.L."/>
            <person name="Dalla E."/>
            <person name="Dalrymple B.P."/>
            <person name="de Bono B."/>
            <person name="Della Gatta G."/>
            <person name="di Bernardo D."/>
            <person name="Down T."/>
            <person name="Engstrom P."/>
            <person name="Fagiolini M."/>
            <person name="Faulkner G."/>
            <person name="Fletcher C.F."/>
            <person name="Fukushima T."/>
            <person name="Furuno M."/>
            <person name="Futaki S."/>
            <person name="Gariboldi M."/>
            <person name="Georgii-Hemming P."/>
            <person name="Gingeras T.R."/>
            <person name="Gojobori T."/>
            <person name="Green R.E."/>
            <person name="Gustincich S."/>
            <person name="Harbers M."/>
            <person name="Hayashi Y."/>
            <person name="Hensch T.K."/>
            <person name="Hirokawa N."/>
            <person name="Hill D."/>
            <person name="Huminiecki L."/>
            <person name="Iacono M."/>
            <person name="Ikeo K."/>
            <person name="Iwama A."/>
            <person name="Ishikawa T."/>
            <person name="Jakt M."/>
            <person name="Kanapin A."/>
            <person name="Katoh M."/>
            <person name="Kawasawa Y."/>
            <person name="Kelso J."/>
            <person name="Kitamura H."/>
            <person name="Kitano H."/>
            <person name="Kollias G."/>
            <person name="Krishnan S.P."/>
            <person name="Kruger A."/>
            <person name="Kummerfeld S.K."/>
            <person name="Kurochkin I.V."/>
            <person name="Lareau L.F."/>
            <person name="Lazarevic D."/>
            <person name="Lipovich L."/>
            <person name="Liu J."/>
            <person name="Liuni S."/>
            <person name="McWilliam S."/>
            <person name="Madan Babu M."/>
            <person name="Madera M."/>
            <person name="Marchionni L."/>
            <person name="Matsuda H."/>
            <person name="Matsuzawa S."/>
            <person name="Miki H."/>
            <person name="Mignone F."/>
            <person name="Miyake S."/>
            <person name="Morris K."/>
            <person name="Mottagui-Tabar S."/>
            <person name="Mulder N."/>
            <person name="Nakano N."/>
            <person name="Nakauchi H."/>
            <person name="Ng P."/>
            <person name="Nilsson R."/>
            <person name="Nishiguchi S."/>
            <person name="Nishikawa S."/>
            <person name="Nori F."/>
            <person name="Ohara O."/>
            <person name="Okazaki Y."/>
            <person name="Orlando V."/>
            <person name="Pang K.C."/>
            <person name="Pavan W.J."/>
            <person name="Pavesi G."/>
            <person name="Pesole G."/>
            <person name="Petrovsky N."/>
            <person name="Piazza S."/>
            <person name="Reed J."/>
            <person name="Reid J.F."/>
            <person name="Ring B.Z."/>
            <person name="Ringwald M."/>
            <person name="Rost B."/>
            <person name="Ruan Y."/>
            <person name="Salzberg S.L."/>
            <person name="Sandelin A."/>
            <person name="Schneider C."/>
            <person name="Schoenbach C."/>
            <person name="Sekiguchi K."/>
            <person name="Semple C.A."/>
            <person name="Seno S."/>
            <person name="Sessa L."/>
            <person name="Sheng Y."/>
            <person name="Shibata Y."/>
            <person name="Shimada H."/>
            <person name="Shimada K."/>
            <person name="Silva D."/>
            <person name="Sinclair B."/>
            <person name="Sperling S."/>
            <person name="Stupka E."/>
            <person name="Sugiura K."/>
            <person name="Sultana R."/>
            <person name="Takenaka Y."/>
            <person name="Taki K."/>
            <person name="Tammoja K."/>
            <person name="Tan S.L."/>
            <person name="Tang S."/>
            <person name="Taylor M.S."/>
            <person name="Tegner J."/>
            <person name="Teichmann S.A."/>
            <person name="Ueda H.R."/>
            <person name="van Nimwegen E."/>
            <person name="Verardo R."/>
            <person name="Wei C.L."/>
            <person name="Yagi K."/>
            <person name="Yamanishi H."/>
            <person name="Zabarovsky E."/>
            <person name="Zhu S."/>
            <person name="Zimmer A."/>
            <person name="Hide W."/>
            <person name="Bult C."/>
            <person name="Grimmond S.M."/>
            <person name="Teasdale R.D."/>
            <person name="Liu E.T."/>
            <person name="Brusic V."/>
            <person name="Quackenbush J."/>
            <person name="Wahlestedt C."/>
            <person name="Mattick J.S."/>
            <person name="Hume D.A."/>
            <person name="Kai C."/>
            <person name="Sasaki D."/>
            <person name="Tomaru Y."/>
            <person name="Fukuda S."/>
            <person name="Kanamori-Katayama M."/>
            <person name="Suzuki M."/>
            <person name="Aoki J."/>
            <person name="Arakawa T."/>
            <person name="Iida J."/>
            <person name="Imamura K."/>
            <person name="Itoh M."/>
            <person name="Kato T."/>
            <person name="Kawaji H."/>
            <person name="Kawagashira N."/>
            <person name="Kawashima T."/>
            <person name="Kojima M."/>
            <person name="Kondo S."/>
            <person name="Konno H."/>
            <person name="Nakano K."/>
            <person name="Ninomiya N."/>
            <person name="Nishio T."/>
            <person name="Okada M."/>
            <person name="Plessy C."/>
            <person name="Shibata K."/>
            <person name="Shiraki T."/>
            <person name="Suzuki S."/>
            <person name="Tagami M."/>
            <person name="Waki K."/>
            <person name="Watahiki A."/>
            <person name="Okamura-Oho Y."/>
            <person name="Suzuki H."/>
            <person name="Kawai J."/>
            <person name="Hayashizaki Y."/>
        </authorList>
    </citation>
    <scope>NUCLEOTIDE SEQUENCE [LARGE SCALE MRNA]</scope>
    <source>
        <strain>C57BL/6J</strain>
        <tissue>Vagina</tissue>
    </source>
</reference>
<reference key="3">
    <citation type="journal article" date="2009" name="PLoS Biol.">
        <title>Lineage-specific biology revealed by a finished genome assembly of the mouse.</title>
        <authorList>
            <person name="Church D.M."/>
            <person name="Goodstadt L."/>
            <person name="Hillier L.W."/>
            <person name="Zody M.C."/>
            <person name="Goldstein S."/>
            <person name="She X."/>
            <person name="Bult C.J."/>
            <person name="Agarwala R."/>
            <person name="Cherry J.L."/>
            <person name="DiCuccio M."/>
            <person name="Hlavina W."/>
            <person name="Kapustin Y."/>
            <person name="Meric P."/>
            <person name="Maglott D."/>
            <person name="Birtle Z."/>
            <person name="Marques A.C."/>
            <person name="Graves T."/>
            <person name="Zhou S."/>
            <person name="Teague B."/>
            <person name="Potamousis K."/>
            <person name="Churas C."/>
            <person name="Place M."/>
            <person name="Herschleb J."/>
            <person name="Runnheim R."/>
            <person name="Forrest D."/>
            <person name="Amos-Landgraf J."/>
            <person name="Schwartz D.C."/>
            <person name="Cheng Z."/>
            <person name="Lindblad-Toh K."/>
            <person name="Eichler E.E."/>
            <person name="Ponting C.P."/>
        </authorList>
    </citation>
    <scope>NUCLEOTIDE SEQUENCE [LARGE SCALE GENOMIC DNA]</scope>
    <source>
        <strain>C57BL/6J</strain>
    </source>
</reference>
<reference key="4">
    <citation type="journal article" date="2007" name="Proc. Natl. Acad. Sci. U.S.A.">
        <title>Large-scale phosphorylation analysis of mouse liver.</title>
        <authorList>
            <person name="Villen J."/>
            <person name="Beausoleil S.A."/>
            <person name="Gerber S.A."/>
            <person name="Gygi S.P."/>
        </authorList>
    </citation>
    <scope>PHOSPHORYLATION [LARGE SCALE ANALYSIS] AT THR-1365 AND THR-1367</scope>
    <scope>IDENTIFICATION BY MASS SPECTROMETRY [LARGE SCALE ANALYSIS]</scope>
    <source>
        <tissue>Liver</tissue>
    </source>
</reference>
<reference key="5">
    <citation type="journal article" date="2009" name="Nat. Biotechnol.">
        <title>Mass-spectrometric identification and relative quantification of N-linked cell surface glycoproteins.</title>
        <authorList>
            <person name="Wollscheid B."/>
            <person name="Bausch-Fluck D."/>
            <person name="Henderson C."/>
            <person name="O'Brien R."/>
            <person name="Bibel M."/>
            <person name="Schiess R."/>
            <person name="Aebersold R."/>
            <person name="Watts J.D."/>
        </authorList>
    </citation>
    <scope>GLYCOSYLATION [LARGE SCALE ANALYSIS] AT ASN-398; ASN-409 AND ASN-521</scope>
</reference>
<reference key="6">
    <citation type="journal article" date="2010" name="Cell">
        <title>A tissue-specific atlas of mouse protein phosphorylation and expression.</title>
        <authorList>
            <person name="Huttlin E.L."/>
            <person name="Jedrychowski M.P."/>
            <person name="Elias J.E."/>
            <person name="Goswami T."/>
            <person name="Rad R."/>
            <person name="Beausoleil S.A."/>
            <person name="Villen J."/>
            <person name="Haas W."/>
            <person name="Sowa M.E."/>
            <person name="Gygi S.P."/>
        </authorList>
    </citation>
    <scope>PHOSPHORYLATION [LARGE SCALE ANALYSIS] AT TYR-264; SER-269; SER-1355; SER-1358; THR-1365 AND THR-1367</scope>
    <scope>IDENTIFICATION BY MASS SPECTROMETRY [LARGE SCALE ANALYSIS]</scope>
    <source>
        <tissue>Brain</tissue>
        <tissue>Brown adipose tissue</tissue>
        <tissue>Heart</tissue>
        <tissue>Kidney</tissue>
        <tissue>Liver</tissue>
        <tissue>Lung</tissue>
        <tissue>Pancreas</tissue>
        <tissue>Spleen</tissue>
        <tissue>Testis</tissue>
    </source>
</reference>
<name>CBPD_MOUSE</name>
<keyword id="KW-0121">Carboxypeptidase</keyword>
<keyword id="KW-1003">Cell membrane</keyword>
<keyword id="KW-0325">Glycoprotein</keyword>
<keyword id="KW-0378">Hydrolase</keyword>
<keyword id="KW-0449">Lipoprotein</keyword>
<keyword id="KW-0472">Membrane</keyword>
<keyword id="KW-0479">Metal-binding</keyword>
<keyword id="KW-0482">Metalloprotease</keyword>
<keyword id="KW-0564">Palmitate</keyword>
<keyword id="KW-0597">Phosphoprotein</keyword>
<keyword id="KW-0645">Protease</keyword>
<keyword id="KW-1185">Reference proteome</keyword>
<keyword id="KW-0677">Repeat</keyword>
<keyword id="KW-0732">Signal</keyword>
<keyword id="KW-0812">Transmembrane</keyword>
<keyword id="KW-1133">Transmembrane helix</keyword>
<keyword id="KW-0862">Zinc</keyword>
<dbReference type="EC" id="3.4.17.22"/>
<dbReference type="EMBL" id="D85391">
    <property type="protein sequence ID" value="BAA33371.1"/>
    <property type="molecule type" value="mRNA"/>
</dbReference>
<dbReference type="EMBL" id="AK137737">
    <property type="protein sequence ID" value="BAE23483.1"/>
    <property type="molecule type" value="mRNA"/>
</dbReference>
<dbReference type="EMBL" id="AL645479">
    <property type="status" value="NOT_ANNOTATED_CDS"/>
    <property type="molecule type" value="Genomic_DNA"/>
</dbReference>
<dbReference type="CCDS" id="CCDS25071.1"/>
<dbReference type="RefSeq" id="NP_031780.2">
    <property type="nucleotide sequence ID" value="NM_007754.2"/>
</dbReference>
<dbReference type="SMR" id="O89001"/>
<dbReference type="BioGRID" id="198853">
    <property type="interactions" value="6"/>
</dbReference>
<dbReference type="FunCoup" id="O89001">
    <property type="interactions" value="2984"/>
</dbReference>
<dbReference type="IntAct" id="O89001">
    <property type="interactions" value="2"/>
</dbReference>
<dbReference type="MINT" id="O89001"/>
<dbReference type="STRING" id="10090.ENSMUSP00000021201"/>
<dbReference type="MEROPS" id="M14.011"/>
<dbReference type="MEROPS" id="M14.016"/>
<dbReference type="GlyConnect" id="2184">
    <property type="glycosylation" value="7 N-Linked glycans (7 sites)"/>
</dbReference>
<dbReference type="GlyCosmos" id="O89001">
    <property type="glycosylation" value="15 sites, 7 glycans"/>
</dbReference>
<dbReference type="GlyGen" id="O89001">
    <property type="glycosylation" value="17 sites, 15 N-linked glycans (11 sites), 1 O-linked glycan (1 site)"/>
</dbReference>
<dbReference type="iPTMnet" id="O89001"/>
<dbReference type="PhosphoSitePlus" id="O89001"/>
<dbReference type="SwissPalm" id="O89001"/>
<dbReference type="jPOST" id="O89001"/>
<dbReference type="PaxDb" id="10090-ENSMUSP00000021201"/>
<dbReference type="PeptideAtlas" id="O89001"/>
<dbReference type="ProteomicsDB" id="265566"/>
<dbReference type="Pumba" id="O89001"/>
<dbReference type="Antibodypedia" id="26863">
    <property type="antibodies" value="108 antibodies from 27 providers"/>
</dbReference>
<dbReference type="DNASU" id="12874"/>
<dbReference type="Ensembl" id="ENSMUST00000021201.6">
    <property type="protein sequence ID" value="ENSMUSP00000021201.6"/>
    <property type="gene ID" value="ENSMUSG00000020841.6"/>
</dbReference>
<dbReference type="GeneID" id="12874"/>
<dbReference type="KEGG" id="mmu:12874"/>
<dbReference type="UCSC" id="uc007kga.1">
    <property type="organism name" value="mouse"/>
</dbReference>
<dbReference type="AGR" id="MGI:107265"/>
<dbReference type="CTD" id="1362"/>
<dbReference type="MGI" id="MGI:107265">
    <property type="gene designation" value="Cpd"/>
</dbReference>
<dbReference type="VEuPathDB" id="HostDB:ENSMUSG00000020841"/>
<dbReference type="eggNOG" id="KOG2649">
    <property type="taxonomic scope" value="Eukaryota"/>
</dbReference>
<dbReference type="GeneTree" id="ENSGT00940000156919"/>
<dbReference type="HOGENOM" id="CLU_002495_1_0_1"/>
<dbReference type="InParanoid" id="O89001"/>
<dbReference type="OMA" id="CCKYPPG"/>
<dbReference type="OrthoDB" id="10249045at2759"/>
<dbReference type="PhylomeDB" id="O89001"/>
<dbReference type="TreeFam" id="TF315592"/>
<dbReference type="BRENDA" id="3.4.17.22">
    <property type="organism ID" value="3474"/>
</dbReference>
<dbReference type="Reactome" id="R-MMU-432722">
    <property type="pathway name" value="Golgi Associated Vesicle Biogenesis"/>
</dbReference>
<dbReference type="Reactome" id="R-MMU-9696264">
    <property type="pathway name" value="RND3 GTPase cycle"/>
</dbReference>
<dbReference type="Reactome" id="R-MMU-9696273">
    <property type="pathway name" value="RND1 GTPase cycle"/>
</dbReference>
<dbReference type="BioGRID-ORCS" id="12874">
    <property type="hits" value="2 hits in 79 CRISPR screens"/>
</dbReference>
<dbReference type="ChiTaRS" id="Cpd">
    <property type="organism name" value="mouse"/>
</dbReference>
<dbReference type="PRO" id="PR:O89001"/>
<dbReference type="Proteomes" id="UP000000589">
    <property type="component" value="Chromosome 11"/>
</dbReference>
<dbReference type="RNAct" id="O89001">
    <property type="molecule type" value="protein"/>
</dbReference>
<dbReference type="Bgee" id="ENSMUSG00000020841">
    <property type="expression patterns" value="Expressed in submandibular gland and 280 other cell types or tissues"/>
</dbReference>
<dbReference type="GO" id="GO:0005886">
    <property type="term" value="C:plasma membrane"/>
    <property type="evidence" value="ECO:0007669"/>
    <property type="project" value="UniProtKB-SubCell"/>
</dbReference>
<dbReference type="GO" id="GO:0004181">
    <property type="term" value="F:metallocarboxypeptidase activity"/>
    <property type="evidence" value="ECO:0007669"/>
    <property type="project" value="UniProtKB-EC"/>
</dbReference>
<dbReference type="GO" id="GO:0008270">
    <property type="term" value="F:zinc ion binding"/>
    <property type="evidence" value="ECO:0007669"/>
    <property type="project" value="InterPro"/>
</dbReference>
<dbReference type="GO" id="GO:0006508">
    <property type="term" value="P:proteolysis"/>
    <property type="evidence" value="ECO:0007669"/>
    <property type="project" value="UniProtKB-KW"/>
</dbReference>
<dbReference type="CDD" id="cd03863">
    <property type="entry name" value="M14_CPD_II"/>
    <property type="match status" value="1"/>
</dbReference>
<dbReference type="CDD" id="cd06245">
    <property type="entry name" value="M14_CPD_III"/>
    <property type="match status" value="1"/>
</dbReference>
<dbReference type="CDD" id="cd11308">
    <property type="entry name" value="Peptidase_M14NE-CP-C_like"/>
    <property type="match status" value="3"/>
</dbReference>
<dbReference type="FunFam" id="2.60.40.1120:FF:000005">
    <property type="entry name" value="Carboxypeptidase D"/>
    <property type="match status" value="1"/>
</dbReference>
<dbReference type="FunFam" id="2.60.40.1120:FF:000006">
    <property type="entry name" value="Carboxypeptidase D"/>
    <property type="match status" value="1"/>
</dbReference>
<dbReference type="FunFam" id="2.60.40.1120:FF:000008">
    <property type="entry name" value="Carboxypeptidase D"/>
    <property type="match status" value="1"/>
</dbReference>
<dbReference type="FunFam" id="3.40.630.10:FF:000020">
    <property type="entry name" value="Carboxypeptidase D"/>
    <property type="match status" value="1"/>
</dbReference>
<dbReference type="FunFam" id="3.40.630.10:FF:000026">
    <property type="entry name" value="Carboxypeptidase D"/>
    <property type="match status" value="1"/>
</dbReference>
<dbReference type="FunFam" id="3.40.630.10:FF:000043">
    <property type="entry name" value="Carboxypeptidase D"/>
    <property type="match status" value="1"/>
</dbReference>
<dbReference type="Gene3D" id="2.60.40.1120">
    <property type="entry name" value="Carboxypeptidase-like, regulatory domain"/>
    <property type="match status" value="3"/>
</dbReference>
<dbReference type="Gene3D" id="3.40.630.10">
    <property type="entry name" value="Zn peptidases"/>
    <property type="match status" value="3"/>
</dbReference>
<dbReference type="InterPro" id="IPR008969">
    <property type="entry name" value="CarboxyPept-like_regulatory"/>
</dbReference>
<dbReference type="InterPro" id="IPR034224">
    <property type="entry name" value="M14_CPD_II"/>
</dbReference>
<dbReference type="InterPro" id="IPR033848">
    <property type="entry name" value="M14_CPD_III"/>
</dbReference>
<dbReference type="InterPro" id="IPR000834">
    <property type="entry name" value="Peptidase_M14"/>
</dbReference>
<dbReference type="InterPro" id="IPR050753">
    <property type="entry name" value="Peptidase_M14_domain"/>
</dbReference>
<dbReference type="PANTHER" id="PTHR11532:SF73">
    <property type="entry name" value="CARBOXYPEPTIDASE D"/>
    <property type="match status" value="1"/>
</dbReference>
<dbReference type="PANTHER" id="PTHR11532">
    <property type="entry name" value="PROTEASE M14 CARBOXYPEPTIDASE"/>
    <property type="match status" value="1"/>
</dbReference>
<dbReference type="Pfam" id="PF13620">
    <property type="entry name" value="CarboxypepD_reg"/>
    <property type="match status" value="3"/>
</dbReference>
<dbReference type="Pfam" id="PF00246">
    <property type="entry name" value="Peptidase_M14"/>
    <property type="match status" value="3"/>
</dbReference>
<dbReference type="PRINTS" id="PR00765">
    <property type="entry name" value="CRBOXYPTASEA"/>
</dbReference>
<dbReference type="SMART" id="SM00631">
    <property type="entry name" value="Zn_pept"/>
    <property type="match status" value="3"/>
</dbReference>
<dbReference type="SUPFAM" id="SSF49464">
    <property type="entry name" value="Carboxypeptidase regulatory domain-like"/>
    <property type="match status" value="3"/>
</dbReference>
<dbReference type="SUPFAM" id="SSF53187">
    <property type="entry name" value="Zn-dependent exopeptidases"/>
    <property type="match status" value="3"/>
</dbReference>
<dbReference type="PROSITE" id="PS00132">
    <property type="entry name" value="CARBOXYPEPT_ZN_1"/>
    <property type="match status" value="2"/>
</dbReference>
<dbReference type="PROSITE" id="PS00133">
    <property type="entry name" value="CARBOXYPEPT_ZN_2"/>
    <property type="match status" value="2"/>
</dbReference>
<dbReference type="PROSITE" id="PS52035">
    <property type="entry name" value="PEPTIDASE_M14"/>
    <property type="match status" value="3"/>
</dbReference>
<feature type="signal peptide" evidence="3">
    <location>
        <begin position="1"/>
        <end position="37"/>
    </location>
</feature>
<feature type="chain" id="PRO_0000004402" description="Carboxypeptidase D">
    <location>
        <begin position="38"/>
        <end position="1377"/>
    </location>
</feature>
<feature type="topological domain" description="Extracellular" evidence="3">
    <location>
        <begin position="38"/>
        <end position="1296"/>
    </location>
</feature>
<feature type="transmembrane region" description="Helical" evidence="3">
    <location>
        <begin position="1297"/>
        <end position="1317"/>
    </location>
</feature>
<feature type="topological domain" description="Cytoplasmic" evidence="3">
    <location>
        <begin position="1318"/>
        <end position="1377"/>
    </location>
</feature>
<feature type="domain" description="Peptidase M14 1" evidence="4">
    <location>
        <begin position="62"/>
        <end position="379"/>
    </location>
</feature>
<feature type="domain" description="Peptidase M14 2" evidence="4">
    <location>
        <begin position="501"/>
        <end position="791"/>
    </location>
</feature>
<feature type="domain" description="Peptidase M14 3" evidence="4">
    <location>
        <begin position="929"/>
        <end position="1208"/>
    </location>
</feature>
<feature type="region of interest" description="Disordered" evidence="5">
    <location>
        <begin position="188"/>
        <end position="231"/>
    </location>
</feature>
<feature type="region of interest" description="Disordered" evidence="5">
    <location>
        <begin position="874"/>
        <end position="898"/>
    </location>
</feature>
<feature type="region of interest" description="Disordered" evidence="5">
    <location>
        <begin position="1038"/>
        <end position="1064"/>
    </location>
</feature>
<feature type="region of interest" description="Disordered" evidence="5">
    <location>
        <begin position="1356"/>
        <end position="1377"/>
    </location>
</feature>
<feature type="short sequence motif" description="Cell attachment site" evidence="3">
    <location>
        <begin position="161"/>
        <end position="163"/>
    </location>
</feature>
<feature type="compositionally biased region" description="Basic and acidic residues" evidence="5">
    <location>
        <begin position="1038"/>
        <end position="1047"/>
    </location>
</feature>
<feature type="active site" description="Proton donor/acceptor" evidence="4">
    <location>
        <position position="349"/>
    </location>
</feature>
<feature type="active site" description="Proton donor/acceptor" evidence="4">
    <location>
        <position position="761"/>
    </location>
</feature>
<feature type="binding site" evidence="4">
    <location>
        <position position="138"/>
    </location>
    <ligand>
        <name>Zn(2+)</name>
        <dbReference type="ChEBI" id="CHEBI:29105"/>
        <label>1</label>
        <note>catalytic</note>
    </ligand>
</feature>
<feature type="binding site" evidence="4">
    <location>
        <position position="141"/>
    </location>
    <ligand>
        <name>Zn(2+)</name>
        <dbReference type="ChEBI" id="CHEBI:29105"/>
        <label>1</label>
        <note>catalytic</note>
    </ligand>
</feature>
<feature type="binding site" evidence="4">
    <location>
        <position position="256"/>
    </location>
    <ligand>
        <name>Zn(2+)</name>
        <dbReference type="ChEBI" id="CHEBI:29105"/>
        <label>1</label>
        <note>catalytic</note>
    </ligand>
</feature>
<feature type="binding site" evidence="4">
    <location>
        <position position="563"/>
    </location>
    <ligand>
        <name>Zn(2+)</name>
        <dbReference type="ChEBI" id="CHEBI:29105"/>
        <label>2</label>
        <note>catalytic</note>
    </ligand>
</feature>
<feature type="binding site" evidence="4">
    <location>
        <position position="566"/>
    </location>
    <ligand>
        <name>Zn(2+)</name>
        <dbReference type="ChEBI" id="CHEBI:29105"/>
        <label>2</label>
        <note>catalytic</note>
    </ligand>
</feature>
<feature type="binding site" evidence="4">
    <location>
        <position position="670"/>
    </location>
    <ligand>
        <name>Zn(2+)</name>
        <dbReference type="ChEBI" id="CHEBI:29105"/>
        <label>2</label>
        <note>catalytic</note>
    </ligand>
</feature>
<feature type="site" description="Important for catalytic activity" evidence="2">
    <location>
        <position position="349"/>
    </location>
</feature>
<feature type="modified residue" description="Phosphotyrosine" evidence="9">
    <location>
        <position position="264"/>
    </location>
</feature>
<feature type="modified residue" description="Phosphoserine" evidence="9">
    <location>
        <position position="269"/>
    </location>
</feature>
<feature type="modified residue" description="Phosphoserine" evidence="9">
    <location>
        <position position="1355"/>
    </location>
</feature>
<feature type="modified residue" description="Phosphoserine" evidence="9">
    <location>
        <position position="1358"/>
    </location>
</feature>
<feature type="modified residue" description="Phosphothreonine" evidence="8 9">
    <location>
        <position position="1365"/>
    </location>
</feature>
<feature type="modified residue" description="Phosphothreonine" evidence="8 9">
    <location>
        <position position="1367"/>
    </location>
</feature>
<feature type="lipid moiety-binding region" description="S-palmitoyl cysteine" evidence="1">
    <location>
        <position position="1314"/>
    </location>
</feature>
<feature type="lipid moiety-binding region" description="S-palmitoyl cysteine" evidence="1">
    <location>
        <position position="1318"/>
    </location>
</feature>
<feature type="lipid moiety-binding region" description="S-palmitoyl cysteine" evidence="1">
    <location>
        <position position="1320"/>
    </location>
</feature>
<feature type="glycosylation site" description="N-linked (GlcNAc...) asparagine" evidence="3">
    <location>
        <position position="171"/>
    </location>
</feature>
<feature type="glycosylation site" description="N-linked (GlcNAc...) asparagine" evidence="3">
    <location>
        <position position="216"/>
    </location>
</feature>
<feature type="glycosylation site" description="N-linked (GlcNAc...) asparagine" evidence="6">
    <location>
        <position position="398"/>
    </location>
</feature>
<feature type="glycosylation site" description="N-linked (GlcNAc...) asparagine" evidence="6">
    <location>
        <position position="409"/>
    </location>
</feature>
<feature type="glycosylation site" description="N-linked (GlcNAc...) asparagine" evidence="3">
    <location>
        <position position="428"/>
    </location>
</feature>
<feature type="glycosylation site" description="N-linked (GlcNAc...) asparagine" evidence="6">
    <location>
        <position position="521"/>
    </location>
</feature>
<feature type="glycosylation site" description="N-linked (GlcNAc...) asparagine" evidence="3">
    <location>
        <position position="625"/>
    </location>
</feature>
<feature type="glycosylation site" description="N-linked (GlcNAc...) asparagine" evidence="3">
    <location>
        <position position="810"/>
    </location>
</feature>
<feature type="glycosylation site" description="N-linked (GlcNAc...) asparagine" evidence="3">
    <location>
        <position position="854"/>
    </location>
</feature>
<feature type="glycosylation site" description="N-linked (GlcNAc...) asparagine" evidence="3">
    <location>
        <position position="866"/>
    </location>
</feature>
<feature type="glycosylation site" description="N-linked (GlcNAc...) asparagine" evidence="3">
    <location>
        <position position="878"/>
    </location>
</feature>
<feature type="glycosylation site" description="N-linked (GlcNAc...) asparagine" evidence="3">
    <location>
        <position position="952"/>
    </location>
</feature>
<feature type="glycosylation site" description="N-linked (GlcNAc...) asparagine" evidence="3">
    <location>
        <position position="975"/>
    </location>
</feature>
<feature type="glycosylation site" description="N-linked (GlcNAc...) asparagine" evidence="3">
    <location>
        <position position="1067"/>
    </location>
</feature>
<feature type="glycosylation site" description="N-linked (GlcNAc...) asparagine" evidence="3">
    <location>
        <position position="1139"/>
    </location>
</feature>
<feature type="sequence conflict" description="In Ref. 1; BAA33371." evidence="7" ref="1">
    <original>S</original>
    <variation>T</variation>
    <location>
        <position position="53"/>
    </location>
</feature>
<feature type="sequence conflict" description="In Ref. 1; BAA33371." evidence="7" ref="1">
    <original>ER</original>
    <variation>DG</variation>
    <location>
        <begin position="1039"/>
        <end position="1040"/>
    </location>
</feature>
<protein>
    <recommendedName>
        <fullName>Carboxypeptidase D</fullName>
        <ecNumber>3.4.17.22</ecNumber>
    </recommendedName>
    <alternativeName>
        <fullName>Metallocarboxypeptidase D</fullName>
    </alternativeName>
    <alternativeName>
        <fullName>gp180</fullName>
    </alternativeName>
</protein>
<evidence type="ECO:0000250" key="1"/>
<evidence type="ECO:0000250" key="2">
    <source>
        <dbReference type="UniProtKB" id="Q90240"/>
    </source>
</evidence>
<evidence type="ECO:0000255" key="3"/>
<evidence type="ECO:0000255" key="4">
    <source>
        <dbReference type="PROSITE-ProRule" id="PRU01379"/>
    </source>
</evidence>
<evidence type="ECO:0000256" key="5">
    <source>
        <dbReference type="SAM" id="MobiDB-lite"/>
    </source>
</evidence>
<evidence type="ECO:0000269" key="6">
    <source>
    </source>
</evidence>
<evidence type="ECO:0000305" key="7"/>
<evidence type="ECO:0007744" key="8">
    <source>
    </source>
</evidence>
<evidence type="ECO:0007744" key="9">
    <source>
    </source>
</evidence>
<proteinExistence type="evidence at protein level"/>
<comment type="catalytic activity">
    <reaction>
        <text>Releases C-terminal Arg and Lys from polypeptides.</text>
        <dbReference type="EC" id="3.4.17.22"/>
    </reaction>
</comment>
<comment type="cofactor">
    <cofactor evidence="2">
        <name>Zn(2+)</name>
        <dbReference type="ChEBI" id="CHEBI:29105"/>
    </cofactor>
    <text evidence="2">Binds 2 Zn(2+) ions per subunit.</text>
</comment>
<comment type="subcellular location">
    <subcellularLocation>
        <location evidence="2">Cell membrane</location>
        <topology evidence="3">Single-pass type I membrane protein</topology>
    </subcellularLocation>
</comment>
<comment type="domain">
    <text>There are 3 carboxypeptidase-like domains. Only the first two domains seem to have kept a catalytic activity.</text>
</comment>
<comment type="similarity">
    <text evidence="7">Belongs to the peptidase M14 family.</text>
</comment>
<accession>O89001</accession>
<accession>Q5SVH8</accession>
<gene>
    <name type="primary">Cpd</name>
</gene>
<sequence>MASGRDERPPWRLGRLRLLPPPPLLLLLLLLRSSAQAAHIKKAEATTTTVGGSEAAEGQFDHYYHEAALGEALEAAAAAGPPGLARLFSIGSSVEGRPLWVLRLTAGLGPPPTAAAGLDAAGPLLPGRPQVKLVGNMHGDETVSRQVLVYLARELASGYRRGDPRLVRLLNTTDVYLLPSLNPDGFERAREGDCGLGDSGPPGTSGRDNSRGRDLNRSFPDQFSTGEPPSLDEVPEVRALIDWIRRNKFVLSGNLHGGSVVASYPFDDSPEHKTTGLYSKTSDDEVFRYLAKAYASNHPIMKTGEPHCPGDEDETFKDGITNGAHWYDVEGGMQDYNYVWANCFEITLELSCCKYPPASQLRQEWENNRESLITLIEKVHIGIKGFVKDSVTGSGLENATISVAGINHNITTGRFGDFHRLLVPGTYNLTALSTGYMPLTINNIMVKEGPATEMDFSLRPTVMSVMPGSTEAVTTPGTVAVPNIPPGTPSSHQPIQPKDFHHHHFPDMEIFLRRFANEYPNITRLYSLGKSVESRELYVMEISDNPGVHEPGEPEFKYIGNMHGNEVVGRELLLNLIEYLCKNFGTDPEVTDLVRSTRIHLMPSMNPDGYEKSQEGDSISVVGRNNSNNFDLNRNFPDQFVPITEPTQPETIAVMSWVKAYPFVLSANLHGGSLVVNYPYDDNEQGVATYSKSPDDAVFQQIALSYSKENSQMFQGRPCKDMYLNEYFPHGITNGASWYNVPGGMQDWNYLQTNCFEVTIELGCVKYPFENELPKYWEQNRRSLIQFMKQVHQGVKGFVLDATDGRGILNATLSVAEINHPVTTYKAGDYWRLLVPGTYKITASARGYNPVTKNVTVRSEGAVQVNFTLVRSSADANNESKKGRGHSTSTDDTSDPTSKEFEALIKHLSAENGLEGFMLSSSSDLALYRYHSYKDLSEFLRGLVMNYPHITNLTTLGQSVEYRHIWSLEISNKPNISEPEEPKIRFVAGIHGNAPVGTELLLALAEFLCLNYKRNPVVTQLVDRTRIVIVPSLNPDGRERAQEKDCTSKTGHTNAHGKDLDTDFTSNASQPETKAIIENLIQKQDFSLSIALDGGSVLVTYPYDKPVQTVENKETLKHLASLYANNHPSMHMGQPSCPNNSDENIPGGVMRGAEWHSHLGSMKDYSVTYGHCPEITVYTSCCYFPSAAQLPALWAENKKSLLSMLVEVHKGVHGLVKDKAGKPISKAVIVLNEGIKVYTKEGGYFHVLLAPGVHNINAIADGYQQQHTQVFVHHDAASSVVIVFDTDNRIFGLPRELVVTVSGATMSALILTACIIWCICSIKSNRHKDGFHRLRQHHDEYEDEIRMMSTGSKKSLLSHEFQDETDTEEETLYSSKH</sequence>